<evidence type="ECO:0000250" key="1"/>
<evidence type="ECO:0000250" key="2">
    <source>
        <dbReference type="UniProtKB" id="P00157"/>
    </source>
</evidence>
<evidence type="ECO:0000255" key="3">
    <source>
        <dbReference type="PROSITE-ProRule" id="PRU00967"/>
    </source>
</evidence>
<evidence type="ECO:0000255" key="4">
    <source>
        <dbReference type="PROSITE-ProRule" id="PRU00968"/>
    </source>
</evidence>
<feature type="chain" id="PRO_0000254822" description="Cytochrome b">
    <location>
        <begin position="1"/>
        <end position="382"/>
    </location>
</feature>
<feature type="transmembrane region" description="Helical" evidence="2">
    <location>
        <begin position="33"/>
        <end position="53"/>
    </location>
</feature>
<feature type="transmembrane region" description="Helical" evidence="2">
    <location>
        <begin position="77"/>
        <end position="98"/>
    </location>
</feature>
<feature type="transmembrane region" description="Helical" evidence="2">
    <location>
        <begin position="113"/>
        <end position="133"/>
    </location>
</feature>
<feature type="transmembrane region" description="Helical" evidence="2">
    <location>
        <begin position="178"/>
        <end position="198"/>
    </location>
</feature>
<feature type="transmembrane region" description="Helical" evidence="2">
    <location>
        <begin position="226"/>
        <end position="246"/>
    </location>
</feature>
<feature type="transmembrane region" description="Helical" evidence="2">
    <location>
        <begin position="288"/>
        <end position="308"/>
    </location>
</feature>
<feature type="transmembrane region" description="Helical" evidence="2">
    <location>
        <begin position="320"/>
        <end position="340"/>
    </location>
</feature>
<feature type="transmembrane region" description="Helical" evidence="2">
    <location>
        <begin position="347"/>
        <end position="367"/>
    </location>
</feature>
<feature type="binding site" description="axial binding residue" evidence="2">
    <location>
        <position position="83"/>
    </location>
    <ligand>
        <name>heme b</name>
        <dbReference type="ChEBI" id="CHEBI:60344"/>
        <label>b562</label>
    </ligand>
    <ligandPart>
        <name>Fe</name>
        <dbReference type="ChEBI" id="CHEBI:18248"/>
    </ligandPart>
</feature>
<feature type="binding site" description="axial binding residue" evidence="2">
    <location>
        <position position="97"/>
    </location>
    <ligand>
        <name>heme b</name>
        <dbReference type="ChEBI" id="CHEBI:60344"/>
        <label>b566</label>
    </ligand>
    <ligandPart>
        <name>Fe</name>
        <dbReference type="ChEBI" id="CHEBI:18248"/>
    </ligandPart>
</feature>
<feature type="binding site" description="axial binding residue" evidence="2">
    <location>
        <position position="182"/>
    </location>
    <ligand>
        <name>heme b</name>
        <dbReference type="ChEBI" id="CHEBI:60344"/>
        <label>b562</label>
    </ligand>
    <ligandPart>
        <name>Fe</name>
        <dbReference type="ChEBI" id="CHEBI:18248"/>
    </ligandPart>
</feature>
<feature type="binding site" description="axial binding residue" evidence="2">
    <location>
        <position position="196"/>
    </location>
    <ligand>
        <name>heme b</name>
        <dbReference type="ChEBI" id="CHEBI:60344"/>
        <label>b566</label>
    </ligand>
    <ligandPart>
        <name>Fe</name>
        <dbReference type="ChEBI" id="CHEBI:18248"/>
    </ligandPart>
</feature>
<feature type="binding site" evidence="2">
    <location>
        <position position="201"/>
    </location>
    <ligand>
        <name>a ubiquinone</name>
        <dbReference type="ChEBI" id="CHEBI:16389"/>
    </ligand>
</feature>
<name>CYB_MICRE</name>
<accession>Q35076</accession>
<organism>
    <name type="scientific">Micoureus regina</name>
    <name type="common">Short-furred woolly mouse opossum</name>
    <name type="synonym">Marmosa regina</name>
    <dbReference type="NCBI Taxonomy" id="42720"/>
    <lineage>
        <taxon>Eukaryota</taxon>
        <taxon>Metazoa</taxon>
        <taxon>Chordata</taxon>
        <taxon>Craniata</taxon>
        <taxon>Vertebrata</taxon>
        <taxon>Euteleostomi</taxon>
        <taxon>Mammalia</taxon>
        <taxon>Metatheria</taxon>
        <taxon>Didelphimorphia</taxon>
        <taxon>Didelphidae</taxon>
        <taxon>Marmosa</taxon>
        <taxon>Micoureus</taxon>
    </lineage>
</organism>
<sequence length="382" mass="43139">MTNMRKNHPIMKIINHSFIDLPAPSNISSWWNFGSLLGICLIIQILTGLFLAMHYTSDTLTAFSSVAHICRDVNYGWLIRNMHANGASMFFMCLFIHVGRGIYYGSYLFKETWNIGVILLLTVMATAFVGYVLPWGQMSFWGATVITNLLSAIPYIGNTLVEWIWGGFSVDKATLTRFFAFHFILPFIIMALVMVHLLFLHETGSNNPTGLNPDSDKIPFHPYYTIKDALGFMLMFLILMSLAMFSPDLLGDPDNFTPANPLNTPPHIKPEWYFLFAYAILRSIPNKLGGVLALLASILVLIIIPLLHLSKQRSLMFRPISQILFWLLTANLLTLTWIGGQPVEQPFIIIGQLASILYFTIIIILMPLAGMMEDNLLEPKFP</sequence>
<comment type="function">
    <text evidence="2">Component of the ubiquinol-cytochrome c reductase complex (complex III or cytochrome b-c1 complex) that is part of the mitochondrial respiratory chain. The b-c1 complex mediates electron transfer from ubiquinol to cytochrome c. Contributes to the generation of a proton gradient across the mitochondrial membrane that is then used for ATP synthesis.</text>
</comment>
<comment type="cofactor">
    <cofactor evidence="2">
        <name>heme b</name>
        <dbReference type="ChEBI" id="CHEBI:60344"/>
    </cofactor>
    <text evidence="2">Binds 2 heme b groups non-covalently.</text>
</comment>
<comment type="subunit">
    <text evidence="2">The cytochrome bc1 complex contains 11 subunits: 3 respiratory subunits (MT-CYB, CYC1 and UQCRFS1), 2 core proteins (UQCRC1 and UQCRC2) and 6 low-molecular weight proteins (UQCRH/QCR6, UQCRB/QCR7, UQCRQ/QCR8, UQCR10/QCR9, UQCR11/QCR10 and a cleavage product of UQCRFS1). This cytochrome bc1 complex then forms a dimer.</text>
</comment>
<comment type="subcellular location">
    <subcellularLocation>
        <location evidence="2">Mitochondrion inner membrane</location>
        <topology evidence="2">Multi-pass membrane protein</topology>
    </subcellularLocation>
</comment>
<comment type="miscellaneous">
    <text evidence="1">Heme 1 (or BL or b562) is low-potential and absorbs at about 562 nm, and heme 2 (or BH or b566) is high-potential and absorbs at about 566 nm.</text>
</comment>
<comment type="similarity">
    <text evidence="3 4">Belongs to the cytochrome b family.</text>
</comment>
<comment type="caution">
    <text evidence="2">The full-length protein contains only eight transmembrane helices, not nine as predicted by bioinformatics tools.</text>
</comment>
<proteinExistence type="inferred from homology"/>
<protein>
    <recommendedName>
        <fullName>Cytochrome b</fullName>
    </recommendedName>
    <alternativeName>
        <fullName>Complex III subunit 3</fullName>
    </alternativeName>
    <alternativeName>
        <fullName>Complex III subunit III</fullName>
    </alternativeName>
    <alternativeName>
        <fullName>Cytochrome b-c1 complex subunit 3</fullName>
    </alternativeName>
    <alternativeName>
        <fullName>Ubiquinol-cytochrome-c reductase complex cytochrome b subunit</fullName>
    </alternativeName>
</protein>
<geneLocation type="mitochondrion"/>
<keyword id="KW-0249">Electron transport</keyword>
<keyword id="KW-0349">Heme</keyword>
<keyword id="KW-0408">Iron</keyword>
<keyword id="KW-0472">Membrane</keyword>
<keyword id="KW-0479">Metal-binding</keyword>
<keyword id="KW-0496">Mitochondrion</keyword>
<keyword id="KW-0999">Mitochondrion inner membrane</keyword>
<keyword id="KW-0679">Respiratory chain</keyword>
<keyword id="KW-0812">Transmembrane</keyword>
<keyword id="KW-1133">Transmembrane helix</keyword>
<keyword id="KW-0813">Transport</keyword>
<keyword id="KW-0830">Ubiquinone</keyword>
<dbReference type="EMBL" id="U34675">
    <property type="protein sequence ID" value="AAA99759.1"/>
    <property type="molecule type" value="Genomic_DNA"/>
</dbReference>
<dbReference type="SMR" id="Q35076"/>
<dbReference type="GO" id="GO:0005743">
    <property type="term" value="C:mitochondrial inner membrane"/>
    <property type="evidence" value="ECO:0007669"/>
    <property type="project" value="UniProtKB-SubCell"/>
</dbReference>
<dbReference type="GO" id="GO:0045275">
    <property type="term" value="C:respiratory chain complex III"/>
    <property type="evidence" value="ECO:0007669"/>
    <property type="project" value="InterPro"/>
</dbReference>
<dbReference type="GO" id="GO:0046872">
    <property type="term" value="F:metal ion binding"/>
    <property type="evidence" value="ECO:0007669"/>
    <property type="project" value="UniProtKB-KW"/>
</dbReference>
<dbReference type="GO" id="GO:0008121">
    <property type="term" value="F:ubiquinol-cytochrome-c reductase activity"/>
    <property type="evidence" value="ECO:0007669"/>
    <property type="project" value="InterPro"/>
</dbReference>
<dbReference type="GO" id="GO:0006122">
    <property type="term" value="P:mitochondrial electron transport, ubiquinol to cytochrome c"/>
    <property type="evidence" value="ECO:0007669"/>
    <property type="project" value="TreeGrafter"/>
</dbReference>
<dbReference type="CDD" id="cd00290">
    <property type="entry name" value="cytochrome_b_C"/>
    <property type="match status" value="1"/>
</dbReference>
<dbReference type="CDD" id="cd00284">
    <property type="entry name" value="Cytochrome_b_N"/>
    <property type="match status" value="1"/>
</dbReference>
<dbReference type="FunFam" id="1.20.810.10:FF:000002">
    <property type="entry name" value="Cytochrome b"/>
    <property type="match status" value="1"/>
</dbReference>
<dbReference type="Gene3D" id="1.20.810.10">
    <property type="entry name" value="Cytochrome Bc1 Complex, Chain C"/>
    <property type="match status" value="1"/>
</dbReference>
<dbReference type="InterPro" id="IPR005798">
    <property type="entry name" value="Cyt_b/b6_C"/>
</dbReference>
<dbReference type="InterPro" id="IPR036150">
    <property type="entry name" value="Cyt_b/b6_C_sf"/>
</dbReference>
<dbReference type="InterPro" id="IPR005797">
    <property type="entry name" value="Cyt_b/b6_N"/>
</dbReference>
<dbReference type="InterPro" id="IPR027387">
    <property type="entry name" value="Cytb/b6-like_sf"/>
</dbReference>
<dbReference type="InterPro" id="IPR030689">
    <property type="entry name" value="Cytochrome_b"/>
</dbReference>
<dbReference type="InterPro" id="IPR048260">
    <property type="entry name" value="Cytochrome_b_C_euk/bac"/>
</dbReference>
<dbReference type="InterPro" id="IPR048259">
    <property type="entry name" value="Cytochrome_b_N_euk/bac"/>
</dbReference>
<dbReference type="InterPro" id="IPR016174">
    <property type="entry name" value="Di-haem_cyt_TM"/>
</dbReference>
<dbReference type="PANTHER" id="PTHR19271">
    <property type="entry name" value="CYTOCHROME B"/>
    <property type="match status" value="1"/>
</dbReference>
<dbReference type="PANTHER" id="PTHR19271:SF16">
    <property type="entry name" value="CYTOCHROME B"/>
    <property type="match status" value="1"/>
</dbReference>
<dbReference type="Pfam" id="PF00032">
    <property type="entry name" value="Cytochrom_B_C"/>
    <property type="match status" value="1"/>
</dbReference>
<dbReference type="Pfam" id="PF00033">
    <property type="entry name" value="Cytochrome_B"/>
    <property type="match status" value="1"/>
</dbReference>
<dbReference type="PIRSF" id="PIRSF038885">
    <property type="entry name" value="COB"/>
    <property type="match status" value="1"/>
</dbReference>
<dbReference type="SUPFAM" id="SSF81648">
    <property type="entry name" value="a domain/subunit of cytochrome bc1 complex (Ubiquinol-cytochrome c reductase)"/>
    <property type="match status" value="1"/>
</dbReference>
<dbReference type="SUPFAM" id="SSF81342">
    <property type="entry name" value="Transmembrane di-heme cytochromes"/>
    <property type="match status" value="1"/>
</dbReference>
<dbReference type="PROSITE" id="PS51003">
    <property type="entry name" value="CYTB_CTER"/>
    <property type="match status" value="1"/>
</dbReference>
<dbReference type="PROSITE" id="PS51002">
    <property type="entry name" value="CYTB_NTER"/>
    <property type="match status" value="1"/>
</dbReference>
<reference key="1">
    <citation type="journal article" date="1996" name="J. Mammal. Evol.">
        <title>Relationships among didelphid marsupials based on sequence variation in the mitochondrial cytochrome b gene.</title>
        <authorList>
            <person name="Patton J.L."/>
            <person name="dos Reis Maria S.F."/>
            <person name="da Silva N.F."/>
        </authorList>
    </citation>
    <scope>NUCLEOTIDE SEQUENCE [GENOMIC DNA]</scope>
</reference>
<gene>
    <name type="primary">MT-CYB</name>
    <name type="synonym">COB</name>
    <name type="synonym">CYTB</name>
    <name type="synonym">MTCYB</name>
</gene>